<name>FLGK_SALTY</name>
<gene>
    <name type="primary">flgK</name>
    <name type="synonym">flaS</name>
    <name type="synonym">flaW</name>
    <name type="ordered locus">STM1183</name>
</gene>
<dbReference type="EMBL" id="X51738">
    <property type="protein sequence ID" value="CAA36025.1"/>
    <property type="molecule type" value="Genomic_DNA"/>
</dbReference>
<dbReference type="EMBL" id="X51739">
    <property type="protein sequence ID" value="CAA36027.1"/>
    <property type="molecule type" value="Genomic_DNA"/>
</dbReference>
<dbReference type="EMBL" id="AE006468">
    <property type="protein sequence ID" value="AAL20113.1"/>
    <property type="molecule type" value="Genomic_DNA"/>
</dbReference>
<dbReference type="EMBL" id="M24466">
    <property type="protein sequence ID" value="AAA27071.1"/>
    <property type="molecule type" value="Genomic_DNA"/>
</dbReference>
<dbReference type="PIR" id="S10366">
    <property type="entry name" value="SMEBH1"/>
</dbReference>
<dbReference type="RefSeq" id="NP_460154.1">
    <property type="nucleotide sequence ID" value="NC_003197.2"/>
</dbReference>
<dbReference type="RefSeq" id="WP_000096425.1">
    <property type="nucleotide sequence ID" value="NC_003197.2"/>
</dbReference>
<dbReference type="PDB" id="2D4Y">
    <property type="method" value="X-ray"/>
    <property type="resolution" value="2.10 A"/>
    <property type="chains" value="A/B=66-527"/>
</dbReference>
<dbReference type="PDBsum" id="2D4Y"/>
<dbReference type="SMR" id="P0A1J5"/>
<dbReference type="DIP" id="DIP-61313N"/>
<dbReference type="IntAct" id="P0A1J5">
    <property type="interactions" value="1"/>
</dbReference>
<dbReference type="STRING" id="99287.STM1183"/>
<dbReference type="PaxDb" id="99287-STM1183"/>
<dbReference type="GeneID" id="1252701"/>
<dbReference type="KEGG" id="stm:STM1183"/>
<dbReference type="PATRIC" id="fig|99287.12.peg.1251"/>
<dbReference type="HOGENOM" id="CLU_012762_0_1_6"/>
<dbReference type="OMA" id="MIQFQHA"/>
<dbReference type="PhylomeDB" id="P0A1J5"/>
<dbReference type="BioCyc" id="SENT99287:STM1183-MONOMER"/>
<dbReference type="EvolutionaryTrace" id="P0A1J5"/>
<dbReference type="Proteomes" id="UP000001014">
    <property type="component" value="Chromosome"/>
</dbReference>
<dbReference type="GO" id="GO:0009424">
    <property type="term" value="C:bacterial-type flagellum hook"/>
    <property type="evidence" value="ECO:0007669"/>
    <property type="project" value="InterPro"/>
</dbReference>
<dbReference type="GO" id="GO:0005576">
    <property type="term" value="C:extracellular region"/>
    <property type="evidence" value="ECO:0007669"/>
    <property type="project" value="UniProtKB-SubCell"/>
</dbReference>
<dbReference type="GO" id="GO:0005198">
    <property type="term" value="F:structural molecule activity"/>
    <property type="evidence" value="ECO:0007669"/>
    <property type="project" value="InterPro"/>
</dbReference>
<dbReference type="GO" id="GO:0044780">
    <property type="term" value="P:bacterial-type flagellum assembly"/>
    <property type="evidence" value="ECO:0000318"/>
    <property type="project" value="GO_Central"/>
</dbReference>
<dbReference type="InterPro" id="IPR001444">
    <property type="entry name" value="Flag_bb_rod_N"/>
</dbReference>
<dbReference type="InterPro" id="IPR019776">
    <property type="entry name" value="Flagellar_basal_body_rod_CS"/>
</dbReference>
<dbReference type="InterPro" id="IPR010930">
    <property type="entry name" value="Flg_bb/hook_C_dom"/>
</dbReference>
<dbReference type="InterPro" id="IPR002371">
    <property type="entry name" value="FlgK"/>
</dbReference>
<dbReference type="InterPro" id="IPR049119">
    <property type="entry name" value="FlgK_D2-like"/>
</dbReference>
<dbReference type="InterPro" id="IPR053927">
    <property type="entry name" value="FlgK_helical"/>
</dbReference>
<dbReference type="NCBIfam" id="TIGR02492">
    <property type="entry name" value="flgK_ends"/>
    <property type="match status" value="1"/>
</dbReference>
<dbReference type="PANTHER" id="PTHR30033">
    <property type="entry name" value="FLAGELLAR HOOK-ASSOCIATED PROTEIN 1"/>
    <property type="match status" value="1"/>
</dbReference>
<dbReference type="PANTHER" id="PTHR30033:SF1">
    <property type="entry name" value="FLAGELLAR HOOK-ASSOCIATED PROTEIN 1"/>
    <property type="match status" value="1"/>
</dbReference>
<dbReference type="Pfam" id="PF00460">
    <property type="entry name" value="Flg_bb_rod"/>
    <property type="match status" value="1"/>
</dbReference>
<dbReference type="Pfam" id="PF06429">
    <property type="entry name" value="Flg_bbr_C"/>
    <property type="match status" value="1"/>
</dbReference>
<dbReference type="Pfam" id="PF21158">
    <property type="entry name" value="flgK_1st_1"/>
    <property type="match status" value="1"/>
</dbReference>
<dbReference type="Pfam" id="PF22638">
    <property type="entry name" value="FlgK_D1"/>
    <property type="match status" value="1"/>
</dbReference>
<dbReference type="PRINTS" id="PR01005">
    <property type="entry name" value="FLGHOOKAP1"/>
</dbReference>
<dbReference type="SUPFAM" id="SSF64518">
    <property type="entry name" value="Phase 1 flagellin"/>
    <property type="match status" value="1"/>
</dbReference>
<dbReference type="PROSITE" id="PS00588">
    <property type="entry name" value="FLAGELLA_BB_ROD"/>
    <property type="match status" value="1"/>
</dbReference>
<reference key="1">
    <citation type="journal article" date="1990" name="J. Mol. Biol.">
        <title>Flagellar hook and hook-associated proteins of Salmonella typhimurium and their relationship to other axial components of the flagellum.</title>
        <authorList>
            <person name="Homma M."/>
            <person name="Derosier D.J."/>
            <person name="Macnab R.M."/>
        </authorList>
    </citation>
    <scope>NUCLEOTIDE SEQUENCE [GENOMIC DNA]</scope>
</reference>
<reference key="2">
    <citation type="journal article" date="2001" name="Nature">
        <title>Complete genome sequence of Salmonella enterica serovar Typhimurium LT2.</title>
        <authorList>
            <person name="McClelland M."/>
            <person name="Sanderson K.E."/>
            <person name="Spieth J."/>
            <person name="Clifton S.W."/>
            <person name="Latreille P."/>
            <person name="Courtney L."/>
            <person name="Porwollik S."/>
            <person name="Ali J."/>
            <person name="Dante M."/>
            <person name="Du F."/>
            <person name="Hou S."/>
            <person name="Layman D."/>
            <person name="Leonard S."/>
            <person name="Nguyen C."/>
            <person name="Scott K."/>
            <person name="Holmes A."/>
            <person name="Grewal N."/>
            <person name="Mulvaney E."/>
            <person name="Ryan E."/>
            <person name="Sun H."/>
            <person name="Florea L."/>
            <person name="Miller W."/>
            <person name="Stoneking T."/>
            <person name="Nhan M."/>
            <person name="Waterston R."/>
            <person name="Wilson R.K."/>
        </authorList>
    </citation>
    <scope>NUCLEOTIDE SEQUENCE [LARGE SCALE GENOMIC DNA]</scope>
    <source>
        <strain>LT2 / SGSC1412 / ATCC 700720</strain>
    </source>
</reference>
<reference key="3">
    <citation type="journal article" date="1989" name="J. Bacteriol.">
        <title>L-, P-, and M-ring proteins of the flagellar basal body of Salmonella typhimurium: gene sequences and deduced protein sequences.</title>
        <authorList>
            <person name="Jones C.J."/>
            <person name="Homma M."/>
            <person name="Macnab R.M."/>
        </authorList>
    </citation>
    <scope>NUCLEOTIDE SEQUENCE [GENOMIC DNA] OF 1-21</scope>
</reference>
<reference key="4">
    <citation type="journal article" date="1990" name="J. Mol. Biol.">
        <title>Stoichiometric analysis of the flagellar hook-(basal-body) complex of Salmonella typhimurium.</title>
        <authorList>
            <person name="Jones C.J."/>
            <person name="Macnab R.M."/>
            <person name="Okino H."/>
            <person name="Aizawa S."/>
        </authorList>
    </citation>
    <scope>PROTEIN SEQUENCE OF 2-6</scope>
</reference>
<protein>
    <recommendedName>
        <fullName>Flagellar hook-associated protein 1</fullName>
        <shortName>HAP1</shortName>
    </recommendedName>
</protein>
<organism>
    <name type="scientific">Salmonella typhimurium (strain LT2 / SGSC1412 / ATCC 700720)</name>
    <dbReference type="NCBI Taxonomy" id="99287"/>
    <lineage>
        <taxon>Bacteria</taxon>
        <taxon>Pseudomonadati</taxon>
        <taxon>Pseudomonadota</taxon>
        <taxon>Gammaproteobacteria</taxon>
        <taxon>Enterobacterales</taxon>
        <taxon>Enterobacteriaceae</taxon>
        <taxon>Salmonella</taxon>
    </lineage>
</organism>
<feature type="initiator methionine" description="Removed" evidence="2">
    <location>
        <position position="1"/>
    </location>
</feature>
<feature type="chain" id="PRO_0000180864" description="Flagellar hook-associated protein 1">
    <location>
        <begin position="2"/>
        <end position="553"/>
    </location>
</feature>
<feature type="helix" evidence="4">
    <location>
        <begin position="69"/>
        <end position="100"/>
    </location>
</feature>
<feature type="turn" evidence="4">
    <location>
        <begin position="102"/>
        <end position="104"/>
    </location>
</feature>
<feature type="helix" evidence="4">
    <location>
        <begin position="106"/>
        <end position="122"/>
    </location>
</feature>
<feature type="turn" evidence="4">
    <location>
        <begin position="123"/>
        <end position="125"/>
    </location>
</feature>
<feature type="helix" evidence="4">
    <location>
        <begin position="127"/>
        <end position="186"/>
    </location>
</feature>
<feature type="helix" evidence="4">
    <location>
        <begin position="197"/>
        <end position="212"/>
    </location>
</feature>
<feature type="strand" evidence="4">
    <location>
        <begin position="215"/>
        <end position="220"/>
    </location>
</feature>
<feature type="turn" evidence="4">
    <location>
        <begin position="221"/>
        <end position="223"/>
    </location>
</feature>
<feature type="strand" evidence="4">
    <location>
        <begin position="224"/>
        <end position="229"/>
    </location>
</feature>
<feature type="strand" evidence="4">
    <location>
        <begin position="234"/>
        <end position="237"/>
    </location>
</feature>
<feature type="strand" evidence="4">
    <location>
        <begin position="244"/>
        <end position="248"/>
    </location>
</feature>
<feature type="strand" evidence="4">
    <location>
        <begin position="256"/>
        <end position="262"/>
    </location>
</feature>
<feature type="turn" evidence="4">
    <location>
        <begin position="263"/>
        <end position="265"/>
    </location>
</feature>
<feature type="strand" evidence="4">
    <location>
        <begin position="266"/>
        <end position="269"/>
    </location>
</feature>
<feature type="helix" evidence="4">
    <location>
        <begin position="272"/>
        <end position="275"/>
    </location>
</feature>
<feature type="helix" evidence="4">
    <location>
        <begin position="278"/>
        <end position="289"/>
    </location>
</feature>
<feature type="helix" evidence="4">
    <location>
        <begin position="291"/>
        <end position="313"/>
    </location>
</feature>
<feature type="strand" evidence="4">
    <location>
        <begin position="334"/>
        <end position="337"/>
    </location>
</feature>
<feature type="strand" evidence="4">
    <location>
        <begin position="349"/>
        <end position="353"/>
    </location>
</feature>
<feature type="helix" evidence="4">
    <location>
        <begin position="355"/>
        <end position="357"/>
    </location>
</feature>
<feature type="strand" evidence="4">
    <location>
        <begin position="363"/>
        <end position="367"/>
    </location>
</feature>
<feature type="strand" evidence="4">
    <location>
        <begin position="369"/>
        <end position="376"/>
    </location>
</feature>
<feature type="turn" evidence="4">
    <location>
        <begin position="377"/>
        <end position="379"/>
    </location>
</feature>
<feature type="strand" evidence="4">
    <location>
        <begin position="382"/>
        <end position="384"/>
    </location>
</feature>
<feature type="strand" evidence="4">
    <location>
        <begin position="393"/>
        <end position="395"/>
    </location>
</feature>
<feature type="strand" evidence="4">
    <location>
        <begin position="398"/>
        <end position="401"/>
    </location>
</feature>
<feature type="strand" evidence="4">
    <location>
        <begin position="410"/>
        <end position="417"/>
    </location>
</feature>
<feature type="turn" evidence="4">
    <location>
        <begin position="418"/>
        <end position="423"/>
    </location>
</feature>
<feature type="helix" evidence="4">
    <location>
        <begin position="431"/>
        <end position="433"/>
    </location>
</feature>
<feature type="strand" evidence="4">
    <location>
        <begin position="437"/>
        <end position="439"/>
    </location>
</feature>
<feature type="helix" evidence="4">
    <location>
        <begin position="454"/>
        <end position="460"/>
    </location>
</feature>
<feature type="helix" evidence="4">
    <location>
        <begin position="461"/>
        <end position="464"/>
    </location>
</feature>
<feature type="turn" evidence="4">
    <location>
        <begin position="469"/>
        <end position="471"/>
    </location>
</feature>
<feature type="helix" evidence="4">
    <location>
        <begin position="474"/>
        <end position="511"/>
    </location>
</feature>
<comment type="interaction">
    <interactant intactId="EBI-15610547">
        <id>P0A1J5</id>
    </interactant>
    <interactant intactId="EBI-15610533">
        <id>P0A1J7</id>
        <label>flgN</label>
    </interactant>
    <organismsDiffer>false</organismsDiffer>
    <experiments>3</experiments>
</comment>
<comment type="subcellular location">
    <subcellularLocation>
        <location evidence="1">Secreted</location>
    </subcellularLocation>
    <subcellularLocation>
        <location evidence="1">Bacterial flagellum</location>
    </subcellularLocation>
</comment>
<comment type="similarity">
    <text evidence="3">Belongs to the flagella basal body rod proteins family.</text>
</comment>
<evidence type="ECO:0000250" key="1"/>
<evidence type="ECO:0000269" key="2">
    <source>
    </source>
</evidence>
<evidence type="ECO:0000305" key="3"/>
<evidence type="ECO:0007829" key="4">
    <source>
        <dbReference type="PDB" id="2D4Y"/>
    </source>
</evidence>
<proteinExistence type="evidence at protein level"/>
<sequence>MSSLINHAMSGLNAAQAALNTVSNNINNYNVAGYTRQTTILAQANSTLGAGGWIGNGVYVSGVQREYDAFITNQLRGAQNQSSGLTTRYEQMSKIDNLLADKSSSLSGSLQSFFTSLQTLVSNAEDPAARQALIGKAEGLVNQFKTTDQYLRDQDKQVNIAIGSSVAQINNYAKQIANLNDQISRMTGVGAGASPNDLLDQRDQLVSELNKIVGVEVSVQDGGTYNLTMANGYTLVQGSTARQLAAVPSSADPTRTTVAYVDEAAGNIEIPEKLLNTGSLGGLLTFRSQDLDQTRNTLGQLALAFADAFNAQHTKGYDADGNKGKDFFSIGSPVVYSNSNNADKTVSLTAKVVDSTKVQATDYKIVFDGTDWQVTRTADNTTFTATKDADGKLEIDGLKVTVGTGAQKNDSFLLKPVSNAIVDMNVKVTNEAEIAMASESKLDPDVDTGDSDNRNGQALLDLQNSNVVGGNKTFNDAYATLVSDVGNKTSTLKTSSTTQANVVKQLYKQQQSVSGVNLDEEYGNLQRYQQYYLANAQVLQTANALFDALLNIR</sequence>
<keyword id="KW-0002">3D-structure</keyword>
<keyword id="KW-0975">Bacterial flagellum</keyword>
<keyword id="KW-0903">Direct protein sequencing</keyword>
<keyword id="KW-1185">Reference proteome</keyword>
<keyword id="KW-0964">Secreted</keyword>
<accession>P0A1J5</accession>
<accession>P15932</accession>